<organism>
    <name type="scientific">Vibrio cholerae serotype O1 (strain M66-2)</name>
    <dbReference type="NCBI Taxonomy" id="579112"/>
    <lineage>
        <taxon>Bacteria</taxon>
        <taxon>Pseudomonadati</taxon>
        <taxon>Pseudomonadota</taxon>
        <taxon>Gammaproteobacteria</taxon>
        <taxon>Vibrionales</taxon>
        <taxon>Vibrionaceae</taxon>
        <taxon>Vibrio</taxon>
    </lineage>
</organism>
<accession>C3LUK2</accession>
<comment type="function">
    <text evidence="1">Cleaves the N-terminal amino acid of tripeptides.</text>
</comment>
<comment type="catalytic activity">
    <reaction evidence="1">
        <text>Release of the N-terminal residue from a tripeptide.</text>
        <dbReference type="EC" id="3.4.11.4"/>
    </reaction>
</comment>
<comment type="cofactor">
    <cofactor evidence="1">
        <name>Zn(2+)</name>
        <dbReference type="ChEBI" id="CHEBI:29105"/>
    </cofactor>
    <text evidence="1">Binds 2 Zn(2+) ions per subunit.</text>
</comment>
<comment type="subcellular location">
    <subcellularLocation>
        <location evidence="1">Cytoplasm</location>
    </subcellularLocation>
</comment>
<comment type="similarity">
    <text evidence="1">Belongs to the peptidase M20B family.</text>
</comment>
<gene>
    <name evidence="1" type="primary">pepT</name>
    <name type="ordered locus">VCM66_A0176</name>
</gene>
<reference key="1">
    <citation type="journal article" date="2008" name="PLoS ONE">
        <title>A recalibrated molecular clock and independent origins for the cholera pandemic clones.</title>
        <authorList>
            <person name="Feng L."/>
            <person name="Reeves P.R."/>
            <person name="Lan R."/>
            <person name="Ren Y."/>
            <person name="Gao C."/>
            <person name="Zhou Z."/>
            <person name="Ren Y."/>
            <person name="Cheng J."/>
            <person name="Wang W."/>
            <person name="Wang J."/>
            <person name="Qian W."/>
            <person name="Li D."/>
            <person name="Wang L."/>
        </authorList>
    </citation>
    <scope>NUCLEOTIDE SEQUENCE [LARGE SCALE GENOMIC DNA]</scope>
    <source>
        <strain>M66-2</strain>
    </source>
</reference>
<feature type="chain" id="PRO_1000200905" description="Peptidase T">
    <location>
        <begin position="1"/>
        <end position="410"/>
    </location>
</feature>
<feature type="active site" evidence="1">
    <location>
        <position position="80"/>
    </location>
</feature>
<feature type="active site" description="Proton acceptor" evidence="1">
    <location>
        <position position="174"/>
    </location>
</feature>
<feature type="binding site" evidence="1">
    <location>
        <position position="78"/>
    </location>
    <ligand>
        <name>Zn(2+)</name>
        <dbReference type="ChEBI" id="CHEBI:29105"/>
        <label>1</label>
    </ligand>
</feature>
<feature type="binding site" evidence="1">
    <location>
        <position position="140"/>
    </location>
    <ligand>
        <name>Zn(2+)</name>
        <dbReference type="ChEBI" id="CHEBI:29105"/>
        <label>1</label>
    </ligand>
</feature>
<feature type="binding site" evidence="1">
    <location>
        <position position="140"/>
    </location>
    <ligand>
        <name>Zn(2+)</name>
        <dbReference type="ChEBI" id="CHEBI:29105"/>
        <label>2</label>
    </ligand>
</feature>
<feature type="binding site" evidence="1">
    <location>
        <position position="175"/>
    </location>
    <ligand>
        <name>Zn(2+)</name>
        <dbReference type="ChEBI" id="CHEBI:29105"/>
        <label>2</label>
    </ligand>
</feature>
<feature type="binding site" evidence="1">
    <location>
        <position position="197"/>
    </location>
    <ligand>
        <name>Zn(2+)</name>
        <dbReference type="ChEBI" id="CHEBI:29105"/>
        <label>1</label>
    </ligand>
</feature>
<feature type="binding site" evidence="1">
    <location>
        <position position="379"/>
    </location>
    <ligand>
        <name>Zn(2+)</name>
        <dbReference type="ChEBI" id="CHEBI:29105"/>
        <label>2</label>
    </ligand>
</feature>
<sequence>MKNLVGRFMRYVTFDTQSKPKNHHCPSSTGQKVFAQALYEELLELGLSDVSLDDHGYVMAKLPSNVNYPVPAIGFIAHMDTSPDACGKHVKPQIVEDYQGGDIALGKGDEVLSPIQYPDLHLLHGYNLITTDGTTLLGADNKAGIAEIITAMEILLADSSIPHGDISIAFTPDEEIGRGANHFDVAKFAAQWAYTIDGGPIGELEYENFNAATATVVCHGVNLHPGTAKDKMVNAMHIAAQFILMMPENETPQHTEGYQGFYHLSGATMSVAKSELKYILRDFEASGLQARQALMQAKVAELNQQLKKGRVEVSFEQSYSNMKEKVEPHPHIIELAKQAMVACDVEPKIKPIRGGTDGARLSFMGLPCPNIFTGGYNFHGIHEFITIEGMEAAVQVIMKLAEKTALHYRQ</sequence>
<proteinExistence type="inferred from homology"/>
<protein>
    <recommendedName>
        <fullName evidence="1">Peptidase T</fullName>
        <ecNumber evidence="1">3.4.11.4</ecNumber>
    </recommendedName>
    <alternativeName>
        <fullName evidence="1">Aminotripeptidase</fullName>
        <shortName evidence="1">Tripeptidase</shortName>
    </alternativeName>
    <alternativeName>
        <fullName evidence="1">Tripeptide aminopeptidase</fullName>
    </alternativeName>
</protein>
<keyword id="KW-0031">Aminopeptidase</keyword>
<keyword id="KW-0963">Cytoplasm</keyword>
<keyword id="KW-0378">Hydrolase</keyword>
<keyword id="KW-0479">Metal-binding</keyword>
<keyword id="KW-0482">Metalloprotease</keyword>
<keyword id="KW-0645">Protease</keyword>
<keyword id="KW-0862">Zinc</keyword>
<name>PEPT_VIBCM</name>
<dbReference type="EC" id="3.4.11.4" evidence="1"/>
<dbReference type="EMBL" id="CP001234">
    <property type="protein sequence ID" value="ACP07157.1"/>
    <property type="molecule type" value="Genomic_DNA"/>
</dbReference>
<dbReference type="RefSeq" id="WP_000793867.1">
    <property type="nucleotide sequence ID" value="NC_012580.1"/>
</dbReference>
<dbReference type="SMR" id="C3LUK2"/>
<dbReference type="MEROPS" id="M20.003"/>
<dbReference type="KEGG" id="vcm:VCM66_A0176"/>
<dbReference type="HOGENOM" id="CLU_053676_0_0_6"/>
<dbReference type="Proteomes" id="UP000001217">
    <property type="component" value="Chromosome II"/>
</dbReference>
<dbReference type="GO" id="GO:0005829">
    <property type="term" value="C:cytosol"/>
    <property type="evidence" value="ECO:0007669"/>
    <property type="project" value="TreeGrafter"/>
</dbReference>
<dbReference type="GO" id="GO:0008237">
    <property type="term" value="F:metallopeptidase activity"/>
    <property type="evidence" value="ECO:0007669"/>
    <property type="project" value="UniProtKB-KW"/>
</dbReference>
<dbReference type="GO" id="GO:0045148">
    <property type="term" value="F:tripeptide aminopeptidase activity"/>
    <property type="evidence" value="ECO:0007669"/>
    <property type="project" value="UniProtKB-UniRule"/>
</dbReference>
<dbReference type="GO" id="GO:0008270">
    <property type="term" value="F:zinc ion binding"/>
    <property type="evidence" value="ECO:0007669"/>
    <property type="project" value="UniProtKB-UniRule"/>
</dbReference>
<dbReference type="GO" id="GO:0043171">
    <property type="term" value="P:peptide catabolic process"/>
    <property type="evidence" value="ECO:0007669"/>
    <property type="project" value="UniProtKB-UniRule"/>
</dbReference>
<dbReference type="GO" id="GO:0006508">
    <property type="term" value="P:proteolysis"/>
    <property type="evidence" value="ECO:0007669"/>
    <property type="project" value="UniProtKB-UniRule"/>
</dbReference>
<dbReference type="CDD" id="cd03892">
    <property type="entry name" value="M20_peptT"/>
    <property type="match status" value="1"/>
</dbReference>
<dbReference type="Gene3D" id="3.30.70.360">
    <property type="match status" value="1"/>
</dbReference>
<dbReference type="Gene3D" id="3.40.630.10">
    <property type="entry name" value="Zn peptidases"/>
    <property type="match status" value="1"/>
</dbReference>
<dbReference type="HAMAP" id="MF_00550">
    <property type="entry name" value="Aminopeptidase_M20"/>
    <property type="match status" value="1"/>
</dbReference>
<dbReference type="InterPro" id="IPR001261">
    <property type="entry name" value="ArgE/DapE_CS"/>
</dbReference>
<dbReference type="InterPro" id="IPR036264">
    <property type="entry name" value="Bact_exopeptidase_dim_dom"/>
</dbReference>
<dbReference type="InterPro" id="IPR002933">
    <property type="entry name" value="Peptidase_M20"/>
</dbReference>
<dbReference type="InterPro" id="IPR011650">
    <property type="entry name" value="Peptidase_M20_dimer"/>
</dbReference>
<dbReference type="InterPro" id="IPR010161">
    <property type="entry name" value="Peptidase_M20B"/>
</dbReference>
<dbReference type="NCBIfam" id="TIGR01882">
    <property type="entry name" value="peptidase-T"/>
    <property type="match status" value="1"/>
</dbReference>
<dbReference type="NCBIfam" id="NF003976">
    <property type="entry name" value="PRK05469.1"/>
    <property type="match status" value="1"/>
</dbReference>
<dbReference type="NCBIfam" id="NF009920">
    <property type="entry name" value="PRK13381.1"/>
    <property type="match status" value="1"/>
</dbReference>
<dbReference type="PANTHER" id="PTHR42994">
    <property type="entry name" value="PEPTIDASE T"/>
    <property type="match status" value="1"/>
</dbReference>
<dbReference type="PANTHER" id="PTHR42994:SF1">
    <property type="entry name" value="PEPTIDASE T"/>
    <property type="match status" value="1"/>
</dbReference>
<dbReference type="Pfam" id="PF07687">
    <property type="entry name" value="M20_dimer"/>
    <property type="match status" value="1"/>
</dbReference>
<dbReference type="Pfam" id="PF01546">
    <property type="entry name" value="Peptidase_M20"/>
    <property type="match status" value="1"/>
</dbReference>
<dbReference type="PIRSF" id="PIRSF037215">
    <property type="entry name" value="Peptidase_M20B"/>
    <property type="match status" value="1"/>
</dbReference>
<dbReference type="SUPFAM" id="SSF55031">
    <property type="entry name" value="Bacterial exopeptidase dimerisation domain"/>
    <property type="match status" value="1"/>
</dbReference>
<dbReference type="SUPFAM" id="SSF53187">
    <property type="entry name" value="Zn-dependent exopeptidases"/>
    <property type="match status" value="1"/>
</dbReference>
<dbReference type="PROSITE" id="PS00758">
    <property type="entry name" value="ARGE_DAPE_CPG2_1"/>
    <property type="match status" value="1"/>
</dbReference>
<dbReference type="PROSITE" id="PS00759">
    <property type="entry name" value="ARGE_DAPE_CPG2_2"/>
    <property type="match status" value="1"/>
</dbReference>
<evidence type="ECO:0000255" key="1">
    <source>
        <dbReference type="HAMAP-Rule" id="MF_00550"/>
    </source>
</evidence>